<sequence>MHNVSTTTTGFPLAKILTSTELGDNTIQAANDAANKLFSLTIADLTANQNINTTNAHSTSNILIPELKAPKSLNASSQLTLLIGNLIQILGEKSLTALTNKITAWKSQQQARQQKNLEFSDKINTLLSETEGLTRDYEKQINKLKNADSKIKDLENKINQIQTRLSELDPESPEKKKLSREEIQLTIKKDAAVKDRTLIEQKTLSIHSKLTDKSMQLEKEIDSFSAFSNTASAEQLSTQQKSLTGLASVTQLMATFIQLVGKNNEESLKNDLALFQSLQESRKTEMERKSDEYAAEVRKAEELNRVMGCVGKILGALLTIVSVVAAAFSGGASLALAAVGLALMVTDAIVQAATGNSFMEQALNPIMKAVIEPLIKLLSDAFTKMLEGLGVDSKKAKMIGSILGAIAGALVLVAAVVLVATVGKQAAAKLAENIGKIIGKTLTDLIPKFLKNFSSQLDDLITNAVARLNKFLGAAGDEVISKQIISTHLNQAVLLGESVNSATQAGGSVASAVFQNSASTNLADLTLSKYQVEQLSKYISEAIEKFGQLQEVIADLLASMSNSQANRTDVAKAILQQTTA</sequence>
<organism>
    <name type="scientific">Shigella flexneri</name>
    <dbReference type="NCBI Taxonomy" id="623"/>
    <lineage>
        <taxon>Bacteria</taxon>
        <taxon>Pseudomonadati</taxon>
        <taxon>Pseudomonadota</taxon>
        <taxon>Gammaproteobacteria</taxon>
        <taxon>Enterobacterales</taxon>
        <taxon>Enterobacteriaceae</taxon>
        <taxon>Shigella</taxon>
    </lineage>
</organism>
<keyword id="KW-0002">3D-structure</keyword>
<keyword id="KW-0175">Coiled coil</keyword>
<keyword id="KW-0903">Direct protein sequencing</keyword>
<keyword id="KW-1043">Host membrane</keyword>
<keyword id="KW-1048">Host nucleus</keyword>
<keyword id="KW-0472">Membrane</keyword>
<keyword id="KW-0614">Plasmid</keyword>
<keyword id="KW-1185">Reference proteome</keyword>
<keyword id="KW-0964">Secreted</keyword>
<keyword id="KW-0812">Transmembrane</keyword>
<keyword id="KW-1133">Transmembrane helix</keyword>
<keyword id="KW-0843">Virulence</keyword>
<evidence type="ECO:0000255" key="1"/>
<evidence type="ECO:0000269" key="2">
    <source>
    </source>
</evidence>
<evidence type="ECO:0000269" key="3">
    <source>
    </source>
</evidence>
<evidence type="ECO:0000269" key="4">
    <source>
    </source>
</evidence>
<evidence type="ECO:0000269" key="5">
    <source>
    </source>
</evidence>
<evidence type="ECO:0000269" key="6">
    <source>
    </source>
</evidence>
<evidence type="ECO:0000269" key="7">
    <source>
    </source>
</evidence>
<evidence type="ECO:0000269" key="8">
    <source>
    </source>
</evidence>
<evidence type="ECO:0000269" key="9">
    <source>
    </source>
</evidence>
<evidence type="ECO:0000269" key="10">
    <source>
    </source>
</evidence>
<evidence type="ECO:0000269" key="11">
    <source>
    </source>
</evidence>
<evidence type="ECO:0000269" key="12">
    <source>
    </source>
</evidence>
<evidence type="ECO:0000269" key="13">
    <source>
    </source>
</evidence>
<evidence type="ECO:0000269" key="14">
    <source>
    </source>
</evidence>
<evidence type="ECO:0000269" key="15">
    <source>
    </source>
</evidence>
<evidence type="ECO:0000269" key="16">
    <source>
    </source>
</evidence>
<evidence type="ECO:0000269" key="17">
    <source>
    </source>
</evidence>
<evidence type="ECO:0000269" key="18">
    <source>
    </source>
</evidence>
<evidence type="ECO:0000303" key="19">
    <source>
    </source>
</evidence>
<evidence type="ECO:0000303" key="20">
    <source>
    </source>
</evidence>
<evidence type="ECO:0000303" key="21">
    <source>
    </source>
</evidence>
<evidence type="ECO:0000305" key="22"/>
<evidence type="ECO:0000305" key="23">
    <source>
    </source>
</evidence>
<evidence type="ECO:0000305" key="24">
    <source>
    </source>
</evidence>
<evidence type="ECO:0000305" key="25">
    <source>
    </source>
</evidence>
<evidence type="ECO:0007744" key="26">
    <source>
        <dbReference type="PDB" id="3GZ1"/>
    </source>
</evidence>
<evidence type="ECO:0007744" key="27">
    <source>
        <dbReference type="PDB" id="3GZ2"/>
    </source>
</evidence>
<evidence type="ECO:0007744" key="28">
    <source>
        <dbReference type="PDB" id="3U0C"/>
    </source>
</evidence>
<evidence type="ECO:0007744" key="29">
    <source>
        <dbReference type="PDB" id="5WKQ"/>
    </source>
</evidence>
<evidence type="ECO:0007744" key="30">
    <source>
        <dbReference type="PDB" id="6KEA"/>
    </source>
</evidence>
<evidence type="ECO:0007829" key="31">
    <source>
        <dbReference type="PDB" id="3U0C"/>
    </source>
</evidence>
<evidence type="ECO:0007829" key="32">
    <source>
        <dbReference type="PDB" id="5WKQ"/>
    </source>
</evidence>
<evidence type="ECO:0007829" key="33">
    <source>
        <dbReference type="PDB" id="6KEA"/>
    </source>
</evidence>
<accession>P18011</accession>
<comment type="function">
    <text evidence="2 5 7 15">Component of the type III secretion system (T3SS), also called injectisome, which is used to inject bacterial effector proteins into eukaryotic host cells (PubMed:10545510, PubMed:17367391). IpaB/SctE and IpaC/SctB are inserted into the host membrane where they form a pore and allow the translocation of effector proteins into the cytosol of target cells (PubMed:10545510, PubMed:17367391, PubMed:34809452). Interaction with IpaD/SctA at needle tips leads to the formation of the MxiH/SctF-IpaD/SctA-IpaB/SctE ternary complex, which is essential for host cell sensing (PubMed:17367391, PubMed:19433542). Interaction of IpaB/SctE with host membrane lipids promotes recruitment of IpaC/SctB at the needle tip concomitant with translocon insertion into the host membrane and type III secretion induction (PubMed:19433542).</text>
</comment>
<comment type="function">
    <text evidence="4 6 17 18">Required for efficient dissemination (PubMed:11207551). Necessary for lysis of the two cellular membranes that surround bacteria in protrusions during cell-to-cell spread (PubMed:11207551). Is sufficient to induce macrophage apoptosis through activation of the interleukin-1 beta converting enzyme (ICE) in infected macrophages (PubMed:8670890, PubMed:9009343). In epithelial cells, causes cell-cycle arrest by targeting host MAD2L2, an anaphase-promoting complex/cyclosome (APC) inhibitor (PubMed:17719540).</text>
</comment>
<comment type="activity regulation">
    <text evidence="3">Interaction with the membrane is affected by the pH (PubMed:10971588). IpaB/SctE is more efficient in destabilizing the membrane at pH 5.0 than at neutral pH (PubMed:10971588).</text>
</comment>
<comment type="subunit">
    <text evidence="2 4 5 6 8 10 11 13 14 15 16 17">The core secretion machinery of the T3SS is composed of approximately 20 different proteins, including cytoplasmic components, a base, an export apparatus and a needle (PubMed:30107569). This subunit is involved in the formation of a pore, called the translocon, in host membrane (PubMed:10545510, PubMed:17367391, PubMed:34809452). Interacts with IpaC/SctB (PubMed:10545510, PubMed:17367391, PubMed:7954817). Interacts with the needle tip protein IpaD/SctA (PubMed:17367391, PubMed:24236510). Interacts with the molecular chaperone IpgC, which prevents premature association with IpaC/SctB within the cytoplasm of Shigella cells and protects IpaB/SctE from proteolysis (PubMed:11207551, PubMed:19478065, PubMed:20937829, PubMed:7954817). Interacts with the host protein ICE in the cytoplasm of infected macrophages (PubMed:8670890). Interacts with human MAD2L2 in the G2/M phase of the cell cycle (PubMed:17719540, PubMed:31484720).</text>
</comment>
<comment type="interaction">
    <interactant intactId="EBI-490239">
        <id>P18011</id>
    </interactant>
    <interactant intactId="EBI-1535618">
        <id>P0A2U4</id>
        <label>ipgC</label>
    </interactant>
    <organismsDiffer>false</organismsDiffer>
    <experiments>4</experiments>
</comment>
<comment type="interaction">
    <interactant intactId="EBI-490239">
        <id>P18011</id>
    </interactant>
    <interactant intactId="EBI-489700">
        <id>P29452</id>
        <label>Casp1</label>
    </interactant>
    <organismsDiffer>true</organismsDiffer>
    <experiments>3</experiments>
</comment>
<comment type="interaction">
    <interactant intactId="EBI-490239">
        <id>P18011</id>
    </interactant>
    <interactant intactId="EBI-490245">
        <id>P16070</id>
        <label>CD44</label>
    </interactant>
    <organismsDiffer>true</organismsDiffer>
    <experiments>4</experiments>
</comment>
<comment type="interaction">
    <interactant intactId="EBI-490239">
        <id>P18011</id>
    </interactant>
    <interactant intactId="EBI-77889">
        <id>Q9UI95</id>
        <label>MAD2L2</label>
    </interactant>
    <organismsDiffer>true</organismsDiffer>
    <experiments>7</experiments>
</comment>
<comment type="subcellular location">
    <subcellularLocation>
        <location evidence="2 6 16 18">Secreted</location>
    </subcellularLocation>
    <subcellularLocation>
        <location evidence="2 15">Host membrane</location>
        <topology evidence="15">Multi-pass membrane protein</topology>
    </subcellularLocation>
    <subcellularLocation>
        <location evidence="18">Host cell</location>
    </subcellularLocation>
    <subcellularLocation>
        <location evidence="23">Host nucleus</location>
    </subcellularLocation>
    <text evidence="2 5 6 17 18">Secreted via the type III secretion system (T3SS) (PubMed:10545510). Localizes at the surface of needle tips via IpaD/SctA (PubMed:17367391). IpaB/SctE and IpaC/SctB form a multimeric integral membrane complex in eukaryotic cell membranes (PubMed:10545510, PubMed:17367391). Also secreted into the cytoplasm of the infected macrophage after the escape of bacteria from phagosome, where it colocalizes with ICE (PubMed:8670890, PubMed:9009343). May localize to host cell nucleus during G2/M phase of the host cell cycle (PubMed:17719540).</text>
</comment>
<comment type="induction">
    <text>Synthesis of this immunogen is repressed at 30 degrees Celsius and restored at 37 degrees Celsius.</text>
</comment>
<comment type="domain">
    <text evidence="9 11 12 15">The immediate N-terminus is needed for recognition by the secretion apparatus and chaperone binding (PubMed:29672980). The N-terminal region is necessary for interaction with IpaD/SctA and the sequential maturation of the T3SS needle tip (PubMed:24236510). The C-terminal half is key to the activities needed for formation of an active translocon and possibly for translocation itself (PubMed:29672980). The extreme C-terminus is required for efficient needle tip binding, and its absence also affects regulation of secretion and adhesion to and possibly invasion of host cells (PubMed:20086081). Portion of the translocon pore channel adopts a funnel-like conformation, wherein it narrows toward the cytosolic side of the plasma membrane (PubMed:34809452).</text>
</comment>
<comment type="disruption phenotype">
    <text evidence="2 9">Deletion mutant shows fast constitutive secretion and displays increased adhesion to HeLa cells (PubMed:20086081). Mutant is non-hemolytic in the presence of sheep red blood cell (RBC) (PubMed:10545510, PubMed:20086081). Mutant displays normal secretons (PubMed:10545510).</text>
</comment>
<comment type="similarity">
    <text evidence="22">Belongs to the SctE/SipB/YopB family.</text>
</comment>
<protein>
    <recommendedName>
        <fullName evidence="22">Type 3 secretion system translocon protein SctE</fullName>
        <shortName evidence="22">T3SS translocon protein SctE</shortName>
    </recommendedName>
    <alternativeName>
        <fullName>62 kDa antigen</fullName>
    </alternativeName>
    <alternativeName>
        <fullName>Invasin IpaB</fullName>
    </alternativeName>
</protein>
<dbReference type="EMBL" id="J04117">
    <property type="protein sequence ID" value="AAA26522.1"/>
    <property type="molecule type" value="Genomic_DNA"/>
</dbReference>
<dbReference type="EMBL" id="M34849">
    <property type="protein sequence ID" value="AAA98424.1"/>
    <property type="molecule type" value="Genomic_DNA"/>
</dbReference>
<dbReference type="EMBL" id="AL391753">
    <property type="protein sequence ID" value="CAC05803.1"/>
    <property type="molecule type" value="Genomic_DNA"/>
</dbReference>
<dbReference type="EMBL" id="AF348706">
    <property type="protein sequence ID" value="AAK18446.1"/>
    <property type="molecule type" value="Genomic_DNA"/>
</dbReference>
<dbReference type="EMBL" id="X15319">
    <property type="protein sequence ID" value="CAA33381.1"/>
    <property type="molecule type" value="Genomic_DNA"/>
</dbReference>
<dbReference type="EMBL" id="AF386526">
    <property type="protein sequence ID" value="AAL72352.1"/>
    <property type="molecule type" value="Genomic_DNA"/>
</dbReference>
<dbReference type="PIR" id="A34965">
    <property type="entry name" value="A34965"/>
</dbReference>
<dbReference type="RefSeq" id="NP_085290.1">
    <property type="nucleotide sequence ID" value="NC_002698.1"/>
</dbReference>
<dbReference type="RefSeq" id="NP_858261.1">
    <property type="nucleotide sequence ID" value="NC_004851.1"/>
</dbReference>
<dbReference type="RefSeq" id="WP_010921663.1">
    <property type="nucleotide sequence ID" value="NZ_QWST01000007.1"/>
</dbReference>
<dbReference type="RefSeq" id="YP_009062485.1">
    <property type="nucleotide sequence ID" value="NC_024996.1"/>
</dbReference>
<dbReference type="PDB" id="3GZ1">
    <property type="method" value="X-ray"/>
    <property type="resolution" value="2.15 A"/>
    <property type="chains" value="P/Q=51-72"/>
</dbReference>
<dbReference type="PDB" id="3GZ2">
    <property type="method" value="X-ray"/>
    <property type="resolution" value="2.65 A"/>
    <property type="chains" value="P=16-72"/>
</dbReference>
<dbReference type="PDB" id="3U0C">
    <property type="method" value="X-ray"/>
    <property type="resolution" value="2.05 A"/>
    <property type="chains" value="A/B=28-226"/>
</dbReference>
<dbReference type="PDB" id="5WKQ">
    <property type="method" value="X-ray"/>
    <property type="resolution" value="2.10 A"/>
    <property type="chains" value="A/B=74-242"/>
</dbReference>
<dbReference type="PDB" id="6KEA">
    <property type="method" value="X-ray"/>
    <property type="resolution" value="2.35 A"/>
    <property type="chains" value="A/B/C/D=49-76"/>
</dbReference>
<dbReference type="PDBsum" id="3GZ1"/>
<dbReference type="PDBsum" id="3GZ2"/>
<dbReference type="PDBsum" id="3U0C"/>
<dbReference type="PDBsum" id="5WKQ"/>
<dbReference type="PDBsum" id="6KEA"/>
<dbReference type="SASBDB" id="P18011"/>
<dbReference type="SMR" id="P18011"/>
<dbReference type="DIP" id="DIP-45233N"/>
<dbReference type="IntAct" id="P18011">
    <property type="interactions" value="4"/>
</dbReference>
<dbReference type="PaxDb" id="198214-CP0128"/>
<dbReference type="GeneID" id="1238055"/>
<dbReference type="KEGG" id="sfl:CP0128"/>
<dbReference type="PATRIC" id="fig|198214.7.peg.5383"/>
<dbReference type="HOGENOM" id="CLU_027418_0_0_6"/>
<dbReference type="EvolutionaryTrace" id="P18011"/>
<dbReference type="Proteomes" id="UP000001006">
    <property type="component" value="Plasmid pCP301"/>
</dbReference>
<dbReference type="GO" id="GO:0005576">
    <property type="term" value="C:extracellular region"/>
    <property type="evidence" value="ECO:0007669"/>
    <property type="project" value="UniProtKB-SubCell"/>
</dbReference>
<dbReference type="GO" id="GO:0043657">
    <property type="term" value="C:host cell"/>
    <property type="evidence" value="ECO:0007669"/>
    <property type="project" value="UniProtKB-SubCell"/>
</dbReference>
<dbReference type="GO" id="GO:0033644">
    <property type="term" value="C:host cell membrane"/>
    <property type="evidence" value="ECO:0007669"/>
    <property type="project" value="UniProtKB-SubCell"/>
</dbReference>
<dbReference type="GO" id="GO:0042025">
    <property type="term" value="C:host cell nucleus"/>
    <property type="evidence" value="ECO:0007669"/>
    <property type="project" value="UniProtKB-SubCell"/>
</dbReference>
<dbReference type="GO" id="GO:0016020">
    <property type="term" value="C:membrane"/>
    <property type="evidence" value="ECO:0007669"/>
    <property type="project" value="UniProtKB-KW"/>
</dbReference>
<dbReference type="Gene3D" id="1.20.120.330">
    <property type="entry name" value="Nucleotidyltransferases domain 2"/>
    <property type="match status" value="2"/>
</dbReference>
<dbReference type="InterPro" id="IPR006972">
    <property type="entry name" value="BipB-like_C"/>
</dbReference>
<dbReference type="InterPro" id="IPR032391">
    <property type="entry name" value="IpaB/BipB/SctE_N"/>
</dbReference>
<dbReference type="InterPro" id="IPR003895">
    <property type="entry name" value="T3SS_SctE/BipB"/>
</dbReference>
<dbReference type="NCBIfam" id="NF011901">
    <property type="entry name" value="PRK15374.1"/>
    <property type="match status" value="1"/>
</dbReference>
<dbReference type="Pfam" id="PF04888">
    <property type="entry name" value="SseC"/>
    <property type="match status" value="1"/>
</dbReference>
<dbReference type="Pfam" id="PF16535">
    <property type="entry name" value="T3SSipB"/>
    <property type="match status" value="1"/>
</dbReference>
<dbReference type="PRINTS" id="PR01375">
    <property type="entry name" value="BACINVASINB"/>
</dbReference>
<geneLocation type="plasmid">
    <name>pWR100</name>
</geneLocation>
<geneLocation type="plasmid">
    <name>pWR501</name>
</geneLocation>
<geneLocation type="plasmid">
    <name>pMYSH6000</name>
</geneLocation>
<geneLocation type="plasmid">
    <name>pCP301</name>
</geneLocation>
<name>SCTE_SHIFL</name>
<reference key="1">
    <citation type="journal article" date="1988" name="Microb. Pathog.">
        <title>Nucleotide sequence of the invasion plasmid antigen B and C genes (ipaB and ipaC) of Shigella flexneri.</title>
        <authorList>
            <person name="Baudry B."/>
            <person name="Kaczorek M."/>
            <person name="Sansonetti P.J."/>
        </authorList>
    </citation>
    <scope>NUCLEOTIDE SEQUENCE [GENOMIC DNA]</scope>
    <source>
        <strain>M90T / Serotype 5a</strain>
        <plasmid>pWR100</plasmid>
    </source>
</reference>
<reference key="2">
    <citation type="journal article" date="1988" name="Proc. Natl. Acad. Sci. U.S.A.">
        <title>Characterization of invasion plasmid antigen genes (ipaBCD) from Shigella flexneri.</title>
        <authorList>
            <person name="Venkatesan M.M."/>
            <person name="Buysse J.M."/>
            <person name="Kopecko D.J."/>
        </authorList>
    </citation>
    <scope>NUCLEOTIDE SEQUENCE [GENOMIC DNA]</scope>
    <source>
        <strain>M90T / Serotype 5a</strain>
        <plasmid>pWR100</plasmid>
    </source>
</reference>
<reference key="3">
    <citation type="journal article" date="2000" name="Mol. Microbiol.">
        <title>The virulence plasmid pWR100 and the repertoire of proteins secreted by the type III secretion apparatus of Shigella flexneri.</title>
        <authorList>
            <person name="Buchrieser C."/>
            <person name="Glaser P."/>
            <person name="Rusniok C."/>
            <person name="Nedjari H."/>
            <person name="d'Hauteville H."/>
            <person name="Kunst F."/>
            <person name="Sansonetti P.J."/>
            <person name="Parsot C."/>
        </authorList>
    </citation>
    <scope>NUCLEOTIDE SEQUENCE [GENOMIC DNA]</scope>
    <source>
        <strain>M90T / Serotype 5a</strain>
        <plasmid>pWR100</plasmid>
    </source>
</reference>
<reference key="4">
    <citation type="journal article" date="2001" name="Infect. Immun.">
        <title>Complete DNA sequence and analysis of the large virulence plasmid of Shigella flexneri.</title>
        <authorList>
            <person name="Venkatesan M.M."/>
            <person name="Goldberg M.B."/>
            <person name="Rose D.J."/>
            <person name="Grotbeck E.J."/>
            <person name="Burland V."/>
            <person name="Blattner F.R."/>
        </authorList>
    </citation>
    <scope>NUCLEOTIDE SEQUENCE [GENOMIC DNA]</scope>
    <source>
        <strain>M90T / Serotype 5a</strain>
        <plasmid>pWR501</plasmid>
    </source>
</reference>
<reference key="5">
    <citation type="journal article" date="1989" name="Mol. Microbiol.">
        <title>Functional organization and nucleotide sequence of virulence region-2 on the large virulence plasmid in Shigella flexneri 2a.</title>
        <authorList>
            <person name="Sasakawa C."/>
            <person name="Adler B."/>
            <person name="Tobe T."/>
            <person name="Okada N."/>
            <person name="Nagai S."/>
            <person name="Komatsu K."/>
            <person name="Yoshikawa M."/>
        </authorList>
    </citation>
    <scope>NUCLEOTIDE SEQUENCE [GENOMIC DNA]</scope>
    <source>
        <strain>YSH6000 / Serotype 2a</strain>
        <plasmid>pMYSH6000</plasmid>
    </source>
</reference>
<reference key="6">
    <citation type="journal article" date="2002" name="Nucleic Acids Res.">
        <title>Genome sequence of Shigella flexneri 2a: insights into pathogenicity through comparison with genomes of Escherichia coli K12 and O157.</title>
        <authorList>
            <person name="Jin Q."/>
            <person name="Yuan Z."/>
            <person name="Xu J."/>
            <person name="Wang Y."/>
            <person name="Shen Y."/>
            <person name="Lu W."/>
            <person name="Wang J."/>
            <person name="Liu H."/>
            <person name="Yang J."/>
            <person name="Yang F."/>
            <person name="Zhang X."/>
            <person name="Zhang J."/>
            <person name="Yang G."/>
            <person name="Wu H."/>
            <person name="Qu D."/>
            <person name="Dong J."/>
            <person name="Sun L."/>
            <person name="Xue Y."/>
            <person name="Zhao A."/>
            <person name="Gao Y."/>
            <person name="Zhu J."/>
            <person name="Kan B."/>
            <person name="Ding K."/>
            <person name="Chen S."/>
            <person name="Cheng H."/>
            <person name="Yao Z."/>
            <person name="He B."/>
            <person name="Chen R."/>
            <person name="Ma D."/>
            <person name="Qiang B."/>
            <person name="Wen Y."/>
            <person name="Hou Y."/>
            <person name="Yu J."/>
        </authorList>
    </citation>
    <scope>NUCLEOTIDE SEQUENCE [LARGE SCALE GENOMIC DNA]</scope>
    <source>
        <strain>301 / Serotype 2a</strain>
        <plasmid>pCP301</plasmid>
    </source>
</reference>
<reference key="7">
    <citation type="journal article" date="2000" name="Eur. J. Biochem.">
        <title>Characterization of the interaction of IpaB and IpaD, proteins required for entry of Shigella flexneri into epithelial cells, with a lipid membrane.</title>
        <authorList>
            <person name="De Geyter C."/>
            <person name="Wattiez R."/>
            <person name="Sansonetti P."/>
            <person name="Falmagne P."/>
            <person name="Ruysschaert J.M."/>
            <person name="Parsot C."/>
            <person name="Cabiaux V."/>
        </authorList>
    </citation>
    <scope>PROTEIN SEQUENCE OF 1-16</scope>
    <scope>ACTIVITY REGULATION</scope>
    <source>
        <strain>M90T / Serotype 5a</strain>
    </source>
</reference>
<reference key="8">
    <citation type="journal article" date="1994" name="Cell">
        <title>Extracellular association and cytoplasmic partitioning of the IpaB and IpaC invasins of S. flexneri.</title>
        <authorList>
            <person name="Menard R."/>
            <person name="Sansonetti P."/>
            <person name="Parsot C."/>
            <person name="Vasselon T."/>
        </authorList>
    </citation>
    <scope>INTERACTION WITH IPAC/SCTB AND IPGC</scope>
    <scope>SUBCELLULAR LOCATION</scope>
    <source>
        <strain>M90T / Serotype 5a</strain>
    </source>
</reference>
<reference key="9">
    <citation type="journal article" date="1996" name="EMBO J.">
        <title>A bacterial invasin induces macrophage apoptosis by binding directly to ICE.</title>
        <authorList>
            <person name="Chen Y."/>
            <person name="Smith M.R."/>
            <person name="Thirumalai K."/>
            <person name="Zychlinsky A."/>
        </authorList>
    </citation>
    <scope>FUNCTION IN APOPTOSIS</scope>
    <scope>INTERACTION WITH HOST ICE</scope>
    <scope>SUBCELLULAR LOCATION</scope>
</reference>
<reference key="10">
    <citation type="journal article" date="1997" name="Infect. Immun.">
        <title>IpaB, a Shigella flexneri invasin, colocalizes with interleukin-1 beta-converting enzyme in the cytoplasm of macrophages.</title>
        <authorList>
            <person name="Thirumalai K."/>
            <person name="Kim K.-S."/>
            <person name="Zychlinsky A."/>
        </authorList>
    </citation>
    <scope>FUNCTION IN APOPTOSIS</scope>
    <scope>SUBCELLULAR LOCATION</scope>
</reference>
<reference key="11">
    <citation type="journal article" date="1999" name="J. Cell Biol.">
        <title>The tripartite type III secreton of Shigella flexneri inserts IpaB and IpaC into host membranes.</title>
        <authorList>
            <person name="Blocker A."/>
            <person name="Gounon P."/>
            <person name="Larquet E."/>
            <person name="Niebuhr K."/>
            <person name="Cabiaux V."/>
            <person name="Parsot C."/>
            <person name="Sansonetti P."/>
        </authorList>
    </citation>
    <scope>FUNCTION</scope>
    <scope>SUBUNIT</scope>
    <scope>SUBCELLULAR LOCATION</scope>
    <scope>DISRUPTION PHENOTYPE</scope>
</reference>
<reference key="12">
    <citation type="journal article" date="1999" name="Cell. Microbiol.">
        <title>The secreted IpaB and IpaC invasins and their cytoplasmic chaperone IpgC are required for intercellular dissemination of Shigella flexneri.</title>
        <authorList>
            <person name="Page A.L."/>
            <person name="Ohayon H."/>
            <person name="Sansonetti P.J."/>
            <person name="Parsot C."/>
        </authorList>
    </citation>
    <scope>FUNCTION IN DISSEMINATION</scope>
    <scope>INTERACTION WITH IPGC</scope>
    <source>
        <strain>M90T / Serotype 5a</strain>
    </source>
</reference>
<reference key="13">
    <citation type="journal article" date="2000" name="Cell. Microbiol.">
        <title>Bacterial signals and cell responses during Shigella entry into epithelial cells.</title>
        <authorList>
            <person name="Tran Van Nhieu G."/>
            <person name="Bourdet-Sicard R."/>
            <person name="Dumenil G."/>
            <person name="Blocker A."/>
            <person name="Sansonetti P.J."/>
        </authorList>
    </citation>
    <scope>REVIEW</scope>
</reference>
<reference key="14">
    <citation type="journal article" date="2007" name="Cell">
        <title>A bacterial effector targets Mad2L2, an APC inhibitor, to modulate host cell cycling.</title>
        <authorList>
            <person name="Iwai H."/>
            <person name="Kim M."/>
            <person name="Yoshikawa Y."/>
            <person name="Ashida H."/>
            <person name="Ogawa M."/>
            <person name="Fujita Y."/>
            <person name="Muller D."/>
            <person name="Kirikae T."/>
            <person name="Jackson P.K."/>
            <person name="Kotani S."/>
            <person name="Sasakawa C."/>
        </authorList>
    </citation>
    <scope>FUNCTION IN ALTERATION OF HOST CELL CYCLE</scope>
    <scope>INTERACTION WITH HOST HUMAN MAD2L2</scope>
    <scope>SUBCELLULAR LOCATION</scope>
    <scope>MUTAGENESIS OF ASN-61</scope>
</reference>
<reference key="15">
    <citation type="journal article" date="2007" name="Mol. Microbiol.">
        <title>The type III secretion system needle tip complex mediates host cell sensing and translocon insertion.</title>
        <authorList>
            <person name="Veenendaal A.K."/>
            <person name="Hodgkinson J.L."/>
            <person name="Schwarzer L."/>
            <person name="Stabat D."/>
            <person name="Zenk S.F."/>
            <person name="Blocker A.J."/>
        </authorList>
    </citation>
    <scope>FUNCTION</scope>
    <scope>SUBUNIT</scope>
    <scope>INTERACTION WITH IPAC/SCTB AND IPAD/SCTA</scope>
    <scope>SUBCELLULAR LOCATION</scope>
</reference>
<reference key="16">
    <citation type="journal article" date="2009" name="Infect. Immun.">
        <title>Liposomes recruit IpaC to the Shigella flexneri type III secretion apparatus needle as a final step in secretion induction.</title>
        <authorList>
            <person name="Epler C.R."/>
            <person name="Dickenson N.E."/>
            <person name="Olive A.J."/>
            <person name="Picking W.L."/>
            <person name="Picking W.D."/>
        </authorList>
    </citation>
    <scope>FUNCTION</scope>
</reference>
<reference key="17">
    <citation type="journal article" date="2010" name="Infect. Immun.">
        <title>The extreme C terminus of Shigella flexneri IpaB is required for regulation of type III secretion, needle tip composition, and binding.</title>
        <authorList>
            <person name="Roehrich A.D."/>
            <person name="Martinez-Argudo I."/>
            <person name="Johnson S."/>
            <person name="Blocker A.J."/>
            <person name="Veenendaal A.K."/>
        </authorList>
    </citation>
    <scope>DOMAIN</scope>
    <scope>DISRUPTION PHENOTYPE</scope>
    <scope>MUTAGENESIS OF 572-LYS--ALA-580 AND 578-THR--ALA-580</scope>
    <source>
        <strain>M90T / Serotype 5a</strain>
    </source>
</reference>
<reference key="18">
    <citation type="journal article" date="2013" name="Biochemistry">
        <title>N-terminus of IpaB provides a potential anchor to the Shigella type III secretion system tip complex protein IpaD.</title>
        <authorList>
            <person name="Dickenson N.E."/>
            <person name="Arizmendi O."/>
            <person name="Patil M.K."/>
            <person name="Toth R.T. IV"/>
            <person name="Middaugh C.R."/>
            <person name="Picking W.D."/>
            <person name="Picking W.L."/>
        </authorList>
    </citation>
    <scope>INTERACTION WITH IPAD/SCTA</scope>
    <scope>DOMAIN</scope>
</reference>
<reference key="19">
    <citation type="journal article" date="2018" name="FEMS Microbiol. Lett.">
        <title>Bacterial type III secretion systems: a complex device for the delivery of bacterial effector proteins into eukaryotic host cells.</title>
        <authorList>
            <person name="Wagner S."/>
            <person name="Grin I."/>
            <person name="Malmsheimer S."/>
            <person name="Singh N."/>
            <person name="Torres-Vargas C.E."/>
            <person name="Westerhausen S."/>
        </authorList>
    </citation>
    <scope>REVIEW</scope>
    <scope>NOMENCLATURE</scope>
    <scope>SUBUNIT</scope>
</reference>
<reference key="20">
    <citation type="journal article" date="2021" name="MBio">
        <title>Topology and contribution to the pore channel lining of plasma membrane-embedded Shigella flexneri type 3 secretion translocase IpaB.</title>
        <authorList>
            <person name="Chen P."/>
            <person name="Russo B.C."/>
            <person name="Duncan-Lowey J.K."/>
            <person name="Bitar N."/>
            <person name="Egger K.T."/>
            <person name="Goldberg M.B."/>
        </authorList>
    </citation>
    <scope>FUNCTION</scope>
    <scope>SUBUNIT</scope>
    <scope>SUBCELLULAR LOCATION</scope>
    <scope>DOMAIN</scope>
</reference>
<reference evidence="26" key="21">
    <citation type="journal article" date="2009" name="Proc. Natl. Acad. Sci. U.S.A.">
        <title>IpaB-IpgC interaction defines binding motif for type III secretion translocator.</title>
        <authorList>
            <person name="Lunelli M."/>
            <person name="Lokareddy R.K."/>
            <person name="Zychlinsky A."/>
            <person name="Kolbe M."/>
        </authorList>
    </citation>
    <scope>X-RAY CRYSTALLOGRAPHY (2.15 ANGSTROMS) OF 51-72 IN COMPLEX WITH THE CHAPERONE IPGC</scope>
    <scope>INTERACTION WITH IPGC</scope>
    <source>
        <strain>M90T / Serotype 5a</strain>
    </source>
</reference>
<reference evidence="27" key="22">
    <citation type="journal article" date="2010" name="J. Biol. Chem.">
        <title>Combination of two separate binding domains defines stoichiometry between type III secretion system chaperone IpgC and translocator protein IpaB.</title>
        <authorList>
            <person name="Lokareddy R.K."/>
            <person name="Lunelli M."/>
            <person name="Eilers B."/>
            <person name="Wolter V."/>
            <person name="Kolbe M."/>
        </authorList>
    </citation>
    <scope>X-RAY CRYSTALLOGRAPHY (2.65 ANGSTROMS) OF 16-72 IN COMPLEX WITH IPGC</scope>
    <scope>INTERACTION WITH IPGC</scope>
</reference>
<reference evidence="28" key="23">
    <citation type="journal article" date="2012" name="J. Mol. Biol.">
        <title>The structures of coiled-coil domains from type III secretion system translocators reveal homology to pore-forming toxins.</title>
        <authorList>
            <person name="Barta M.L."/>
            <person name="Dickenson N.E."/>
            <person name="Patil M."/>
            <person name="Keightley A."/>
            <person name="Wyckoff G.J."/>
            <person name="Picking W.D."/>
            <person name="Picking W.L."/>
            <person name="Geisbrecht B.V."/>
        </authorList>
    </citation>
    <scope>X-RAY CRYSTALLOGRAPHY (2.05 ANGSTROMS) OF 28-226</scope>
    <scope>COILED COIL</scope>
</reference>
<reference evidence="29" key="24">
    <citation type="journal article" date="2018" name="Protein Sci.">
        <title>Using disruptive insertional mutagenesis to identify the in situ structure-function landscape of the Shigella translocator protein IpaB.</title>
        <authorList>
            <person name="Barta M.L."/>
            <person name="Tachiyama S."/>
            <person name="Muthuramalingam M."/>
            <person name="Arizmendi O."/>
            <person name="Villanueva C.E."/>
            <person name="Ramyar K.X."/>
            <person name="Geisbrecht B.V."/>
            <person name="Lovell S."/>
            <person name="Battaile K.P."/>
            <person name="Picking W.L."/>
            <person name="Picking W.D."/>
        </authorList>
    </citation>
    <scope>X-RAY CRYSTALLOGRAPHY (2.10 ANGSTROMS) OF 74-242</scope>
    <scope>DOMAIN</scope>
</reference>
<reference evidence="30" key="25">
    <citation type="journal article" date="2019" name="J. Biol. Chem.">
        <title>REV7 has a dynamic adaptor region to accommodate small GTPase RAN/Shigella IpaB ligands, and its activity is regulated by the RanGTP/GDP switch.</title>
        <authorList>
            <person name="Wang X."/>
            <person name="Pernicone N."/>
            <person name="Pertz L."/>
            <person name="Hua D."/>
            <person name="Zhang T."/>
            <person name="Listovsky T."/>
            <person name="Xie W."/>
        </authorList>
    </citation>
    <scope>X-RAY CRYSTALLOGRAPHY (2.35 ANGSTROMS) OF 49-76 IN COMPLEX WITH MAD2L2</scope>
    <scope>INTERACTION WITH MAD2L2</scope>
</reference>
<feature type="chain" id="PRO_0000219853" description="Type 3 secretion system translocon protein SctE">
    <location>
        <begin position="1"/>
        <end position="580"/>
    </location>
</feature>
<feature type="transmembrane region" description="Helical" evidence="1">
    <location>
        <begin position="313"/>
        <end position="333"/>
    </location>
</feature>
<feature type="transmembrane region" description="Helical" evidence="1">
    <location>
        <begin position="399"/>
        <end position="419"/>
    </location>
</feature>
<feature type="region of interest" description="IpgC chaperone binding domain 1" evidence="24">
    <location>
        <begin position="15"/>
        <end position="45"/>
    </location>
</feature>
<feature type="region of interest" description="IpgC chaperone binding domain 2" evidence="24">
    <location>
        <begin position="51"/>
        <end position="72"/>
    </location>
</feature>
<feature type="region of interest" description="Mediates interaction with human MAD2L2" evidence="23">
    <location>
        <begin position="61"/>
        <end position="70"/>
    </location>
</feature>
<feature type="coiled-coil region" evidence="25">
    <location>
        <begin position="104"/>
        <end position="224"/>
    </location>
</feature>
<feature type="sequence variant" description="In plasmid pMYSH6000 and plasmid pCP301.">
    <original>T</original>
    <variation>A</variation>
    <location>
        <position position="18"/>
    </location>
</feature>
<feature type="mutagenesis site" description="Loss of interaction with human MAD2L2." evidence="6">
    <original>N</original>
    <variation>A</variation>
    <location>
        <position position="61"/>
    </location>
</feature>
<feature type="mutagenesis site" description="Shows fast constitutive secretion. Partially invasive and hyperadhesive. Can still form pores by inserting itself and IpaC/SctB into membranes, but is completely unable to lyse red blood cells. Does not affect the ability of Shigella to lyse the epithelial cell invasion vacuole. Affects IpaB/SctE ability to bind needle tips and leads to increased IpaC/SctB recruitment to purified needles." evidence="9">
    <location>
        <begin position="572"/>
        <end position="580"/>
    </location>
</feature>
<feature type="mutagenesis site" description="Shows fast constitutive secretion. Partially invasive and hyperadhesive. Can still form pores by inserting itself and IpaC/SctB into membranes, but is completely unable to lyse red blood cells. Does not affect the ability of Shigella to lyse the epithelial cell invasion vacuole. Affects IpaB/SctE ability to bind needle tips and leads to increased IpaC/SctB recruitment to purified needles." evidence="9">
    <location>
        <begin position="578"/>
        <end position="580"/>
    </location>
</feature>
<feature type="sequence conflict" description="In Ref. 2; AAA26522." evidence="22" ref="2">
    <original>E</original>
    <variation>N</variation>
    <location>
        <position position="167"/>
    </location>
</feature>
<feature type="strand" evidence="33">
    <location>
        <begin position="62"/>
        <end position="67"/>
    </location>
</feature>
<feature type="helix" evidence="31">
    <location>
        <begin position="75"/>
        <end position="90"/>
    </location>
</feature>
<feature type="helix" evidence="31">
    <location>
        <begin position="93"/>
        <end position="95"/>
    </location>
</feature>
<feature type="helix" evidence="31">
    <location>
        <begin position="96"/>
        <end position="166"/>
    </location>
</feature>
<feature type="helix" evidence="31">
    <location>
        <begin position="175"/>
        <end position="222"/>
    </location>
</feature>
<feature type="helix" evidence="32">
    <location>
        <begin position="233"/>
        <end position="237"/>
    </location>
</feature>
<proteinExistence type="evidence at protein level"/>
<gene>
    <name evidence="19" type="primary">sctE</name>
    <name evidence="20 21" type="synonym">ipaB</name>
    <name type="ordered locus">CP0128</name>
</gene>